<evidence type="ECO:0000255" key="1">
    <source>
        <dbReference type="HAMAP-Rule" id="MF_01595"/>
    </source>
</evidence>
<proteinExistence type="inferred from homology"/>
<keyword id="KW-0963">Cytoplasm</keyword>
<keyword id="KW-0460">Magnesium</keyword>
<keyword id="KW-0479">Metal-binding</keyword>
<keyword id="KW-0548">Nucleotidyltransferase</keyword>
<keyword id="KW-1185">Reference proteome</keyword>
<keyword id="KW-0694">RNA-binding</keyword>
<keyword id="KW-0808">Transferase</keyword>
<feature type="chain" id="PRO_0000329708" description="Polyribonucleotide nucleotidyltransferase">
    <location>
        <begin position="1"/>
        <end position="710"/>
    </location>
</feature>
<feature type="domain" description="KH" evidence="1">
    <location>
        <begin position="555"/>
        <end position="614"/>
    </location>
</feature>
<feature type="domain" description="S1 motif" evidence="1">
    <location>
        <begin position="624"/>
        <end position="692"/>
    </location>
</feature>
<feature type="binding site" evidence="1">
    <location>
        <position position="488"/>
    </location>
    <ligand>
        <name>Mg(2+)</name>
        <dbReference type="ChEBI" id="CHEBI:18420"/>
    </ligand>
</feature>
<feature type="binding site" evidence="1">
    <location>
        <position position="494"/>
    </location>
    <ligand>
        <name>Mg(2+)</name>
        <dbReference type="ChEBI" id="CHEBI:18420"/>
    </ligand>
</feature>
<protein>
    <recommendedName>
        <fullName evidence="1">Polyribonucleotide nucleotidyltransferase</fullName>
        <ecNumber evidence="1">2.7.7.8</ecNumber>
    </recommendedName>
    <alternativeName>
        <fullName evidence="1">Polynucleotide phosphorylase</fullName>
        <shortName evidence="1">PNPase</shortName>
    </alternativeName>
</protein>
<name>PNP_MARMM</name>
<comment type="function">
    <text evidence="1">Involved in mRNA degradation. Catalyzes the phosphorolysis of single-stranded polyribonucleotides processively in the 3'- to 5'-direction.</text>
</comment>
<comment type="catalytic activity">
    <reaction evidence="1">
        <text>RNA(n+1) + phosphate = RNA(n) + a ribonucleoside 5'-diphosphate</text>
        <dbReference type="Rhea" id="RHEA:22096"/>
        <dbReference type="Rhea" id="RHEA-COMP:14527"/>
        <dbReference type="Rhea" id="RHEA-COMP:17342"/>
        <dbReference type="ChEBI" id="CHEBI:43474"/>
        <dbReference type="ChEBI" id="CHEBI:57930"/>
        <dbReference type="ChEBI" id="CHEBI:140395"/>
        <dbReference type="EC" id="2.7.7.8"/>
    </reaction>
</comment>
<comment type="cofactor">
    <cofactor evidence="1">
        <name>Mg(2+)</name>
        <dbReference type="ChEBI" id="CHEBI:18420"/>
    </cofactor>
</comment>
<comment type="subcellular location">
    <subcellularLocation>
        <location evidence="1">Cytoplasm</location>
    </subcellularLocation>
</comment>
<comment type="similarity">
    <text evidence="1">Belongs to the polyribonucleotide nucleotidyltransferase family.</text>
</comment>
<organism>
    <name type="scientific">Maricaulis maris (strain MCS10)</name>
    <name type="common">Caulobacter maris</name>
    <dbReference type="NCBI Taxonomy" id="394221"/>
    <lineage>
        <taxon>Bacteria</taxon>
        <taxon>Pseudomonadati</taxon>
        <taxon>Pseudomonadota</taxon>
        <taxon>Alphaproteobacteria</taxon>
        <taxon>Maricaulales</taxon>
        <taxon>Maricaulaceae</taxon>
        <taxon>Maricaulis</taxon>
    </lineage>
</organism>
<reference key="1">
    <citation type="submission" date="2006-08" db="EMBL/GenBank/DDBJ databases">
        <title>Complete sequence of Maricaulis maris MCS10.</title>
        <authorList>
            <consortium name="US DOE Joint Genome Institute"/>
            <person name="Copeland A."/>
            <person name="Lucas S."/>
            <person name="Lapidus A."/>
            <person name="Barry K."/>
            <person name="Detter J.C."/>
            <person name="Glavina del Rio T."/>
            <person name="Hammon N."/>
            <person name="Israni S."/>
            <person name="Dalin E."/>
            <person name="Tice H."/>
            <person name="Pitluck S."/>
            <person name="Saunders E."/>
            <person name="Brettin T."/>
            <person name="Bruce D."/>
            <person name="Han C."/>
            <person name="Tapia R."/>
            <person name="Gilna P."/>
            <person name="Schmutz J."/>
            <person name="Larimer F."/>
            <person name="Land M."/>
            <person name="Hauser L."/>
            <person name="Kyrpides N."/>
            <person name="Mikhailova N."/>
            <person name="Viollier P."/>
            <person name="Stephens C."/>
            <person name="Richardson P."/>
        </authorList>
    </citation>
    <scope>NUCLEOTIDE SEQUENCE [LARGE SCALE GENOMIC DNA]</scope>
    <source>
        <strain>MCS10</strain>
    </source>
</reference>
<dbReference type="EC" id="2.7.7.8" evidence="1"/>
<dbReference type="EMBL" id="CP000449">
    <property type="protein sequence ID" value="ABI67331.1"/>
    <property type="molecule type" value="Genomic_DNA"/>
</dbReference>
<dbReference type="RefSeq" id="WP_011644975.1">
    <property type="nucleotide sequence ID" value="NC_008347.1"/>
</dbReference>
<dbReference type="SMR" id="Q0AK62"/>
<dbReference type="STRING" id="394221.Mmar10_3050"/>
<dbReference type="KEGG" id="mmr:Mmar10_3050"/>
<dbReference type="eggNOG" id="COG1185">
    <property type="taxonomic scope" value="Bacteria"/>
</dbReference>
<dbReference type="HOGENOM" id="CLU_004217_2_2_5"/>
<dbReference type="OrthoDB" id="9804305at2"/>
<dbReference type="Proteomes" id="UP000001964">
    <property type="component" value="Chromosome"/>
</dbReference>
<dbReference type="GO" id="GO:0005829">
    <property type="term" value="C:cytosol"/>
    <property type="evidence" value="ECO:0007669"/>
    <property type="project" value="TreeGrafter"/>
</dbReference>
<dbReference type="GO" id="GO:0000175">
    <property type="term" value="F:3'-5'-RNA exonuclease activity"/>
    <property type="evidence" value="ECO:0007669"/>
    <property type="project" value="TreeGrafter"/>
</dbReference>
<dbReference type="GO" id="GO:0000287">
    <property type="term" value="F:magnesium ion binding"/>
    <property type="evidence" value="ECO:0007669"/>
    <property type="project" value="UniProtKB-UniRule"/>
</dbReference>
<dbReference type="GO" id="GO:0004654">
    <property type="term" value="F:polyribonucleotide nucleotidyltransferase activity"/>
    <property type="evidence" value="ECO:0007669"/>
    <property type="project" value="UniProtKB-UniRule"/>
</dbReference>
<dbReference type="GO" id="GO:0003723">
    <property type="term" value="F:RNA binding"/>
    <property type="evidence" value="ECO:0007669"/>
    <property type="project" value="UniProtKB-UniRule"/>
</dbReference>
<dbReference type="GO" id="GO:0006402">
    <property type="term" value="P:mRNA catabolic process"/>
    <property type="evidence" value="ECO:0007669"/>
    <property type="project" value="UniProtKB-UniRule"/>
</dbReference>
<dbReference type="GO" id="GO:0006396">
    <property type="term" value="P:RNA processing"/>
    <property type="evidence" value="ECO:0007669"/>
    <property type="project" value="InterPro"/>
</dbReference>
<dbReference type="CDD" id="cd02393">
    <property type="entry name" value="KH-I_PNPase"/>
    <property type="match status" value="1"/>
</dbReference>
<dbReference type="CDD" id="cd11363">
    <property type="entry name" value="RNase_PH_PNPase_1"/>
    <property type="match status" value="1"/>
</dbReference>
<dbReference type="CDD" id="cd11364">
    <property type="entry name" value="RNase_PH_PNPase_2"/>
    <property type="match status" value="1"/>
</dbReference>
<dbReference type="CDD" id="cd04472">
    <property type="entry name" value="S1_PNPase"/>
    <property type="match status" value="1"/>
</dbReference>
<dbReference type="FunFam" id="2.40.50.140:FF:000107">
    <property type="entry name" value="Polyribonucleotide nucleotidyltransferase"/>
    <property type="match status" value="1"/>
</dbReference>
<dbReference type="FunFam" id="3.30.1370.10:FF:000001">
    <property type="entry name" value="Polyribonucleotide nucleotidyltransferase"/>
    <property type="match status" value="1"/>
</dbReference>
<dbReference type="FunFam" id="3.30.230.70:FF:000001">
    <property type="entry name" value="Polyribonucleotide nucleotidyltransferase"/>
    <property type="match status" value="1"/>
</dbReference>
<dbReference type="FunFam" id="3.30.230.70:FF:000002">
    <property type="entry name" value="Polyribonucleotide nucleotidyltransferase"/>
    <property type="match status" value="1"/>
</dbReference>
<dbReference type="Gene3D" id="3.30.230.70">
    <property type="entry name" value="GHMP Kinase, N-terminal domain"/>
    <property type="match status" value="2"/>
</dbReference>
<dbReference type="Gene3D" id="3.30.1370.10">
    <property type="entry name" value="K Homology domain, type 1"/>
    <property type="match status" value="1"/>
</dbReference>
<dbReference type="Gene3D" id="2.40.50.140">
    <property type="entry name" value="Nucleic acid-binding proteins"/>
    <property type="match status" value="1"/>
</dbReference>
<dbReference type="HAMAP" id="MF_01595">
    <property type="entry name" value="PNPase"/>
    <property type="match status" value="1"/>
</dbReference>
<dbReference type="InterPro" id="IPR001247">
    <property type="entry name" value="ExoRNase_PH_dom1"/>
</dbReference>
<dbReference type="InterPro" id="IPR015847">
    <property type="entry name" value="ExoRNase_PH_dom2"/>
</dbReference>
<dbReference type="InterPro" id="IPR036345">
    <property type="entry name" value="ExoRNase_PH_dom2_sf"/>
</dbReference>
<dbReference type="InterPro" id="IPR004087">
    <property type="entry name" value="KH_dom"/>
</dbReference>
<dbReference type="InterPro" id="IPR004088">
    <property type="entry name" value="KH_dom_type_1"/>
</dbReference>
<dbReference type="InterPro" id="IPR036612">
    <property type="entry name" value="KH_dom_type_1_sf"/>
</dbReference>
<dbReference type="InterPro" id="IPR012340">
    <property type="entry name" value="NA-bd_OB-fold"/>
</dbReference>
<dbReference type="InterPro" id="IPR012162">
    <property type="entry name" value="PNPase"/>
</dbReference>
<dbReference type="InterPro" id="IPR027408">
    <property type="entry name" value="PNPase/RNase_PH_dom_sf"/>
</dbReference>
<dbReference type="InterPro" id="IPR015848">
    <property type="entry name" value="PNPase_PH_RNA-bd_bac/org-type"/>
</dbReference>
<dbReference type="InterPro" id="IPR020568">
    <property type="entry name" value="Ribosomal_Su5_D2-typ_SF"/>
</dbReference>
<dbReference type="InterPro" id="IPR003029">
    <property type="entry name" value="S1_domain"/>
</dbReference>
<dbReference type="NCBIfam" id="TIGR03591">
    <property type="entry name" value="polynuc_phos"/>
    <property type="match status" value="1"/>
</dbReference>
<dbReference type="NCBIfam" id="NF008805">
    <property type="entry name" value="PRK11824.1"/>
    <property type="match status" value="1"/>
</dbReference>
<dbReference type="PANTHER" id="PTHR11252">
    <property type="entry name" value="POLYRIBONUCLEOTIDE NUCLEOTIDYLTRANSFERASE"/>
    <property type="match status" value="1"/>
</dbReference>
<dbReference type="PANTHER" id="PTHR11252:SF0">
    <property type="entry name" value="POLYRIBONUCLEOTIDE NUCLEOTIDYLTRANSFERASE 1, MITOCHONDRIAL"/>
    <property type="match status" value="1"/>
</dbReference>
<dbReference type="Pfam" id="PF00013">
    <property type="entry name" value="KH_1"/>
    <property type="match status" value="1"/>
</dbReference>
<dbReference type="Pfam" id="PF03726">
    <property type="entry name" value="PNPase"/>
    <property type="match status" value="1"/>
</dbReference>
<dbReference type="Pfam" id="PF01138">
    <property type="entry name" value="RNase_PH"/>
    <property type="match status" value="2"/>
</dbReference>
<dbReference type="Pfam" id="PF03725">
    <property type="entry name" value="RNase_PH_C"/>
    <property type="match status" value="2"/>
</dbReference>
<dbReference type="Pfam" id="PF00575">
    <property type="entry name" value="S1"/>
    <property type="match status" value="1"/>
</dbReference>
<dbReference type="PIRSF" id="PIRSF005499">
    <property type="entry name" value="PNPase"/>
    <property type="match status" value="1"/>
</dbReference>
<dbReference type="SMART" id="SM00322">
    <property type="entry name" value="KH"/>
    <property type="match status" value="1"/>
</dbReference>
<dbReference type="SMART" id="SM00316">
    <property type="entry name" value="S1"/>
    <property type="match status" value="1"/>
</dbReference>
<dbReference type="SUPFAM" id="SSF54791">
    <property type="entry name" value="Eukaryotic type KH-domain (KH-domain type I)"/>
    <property type="match status" value="1"/>
</dbReference>
<dbReference type="SUPFAM" id="SSF50249">
    <property type="entry name" value="Nucleic acid-binding proteins"/>
    <property type="match status" value="1"/>
</dbReference>
<dbReference type="SUPFAM" id="SSF55666">
    <property type="entry name" value="Ribonuclease PH domain 2-like"/>
    <property type="match status" value="2"/>
</dbReference>
<dbReference type="SUPFAM" id="SSF54211">
    <property type="entry name" value="Ribosomal protein S5 domain 2-like"/>
    <property type="match status" value="2"/>
</dbReference>
<dbReference type="PROSITE" id="PS50084">
    <property type="entry name" value="KH_TYPE_1"/>
    <property type="match status" value="1"/>
</dbReference>
<dbReference type="PROSITE" id="PS50126">
    <property type="entry name" value="S1"/>
    <property type="match status" value="1"/>
</dbReference>
<gene>
    <name evidence="1" type="primary">pnp</name>
    <name type="ordered locus">Mmar10_3050</name>
</gene>
<sequence>MFDIQKETIEWAGRPLTIETGRVARQADGAVMVSYGETTVLATAVGVKQAKPGVDFFPLTVNYQEKYFAAGKIPGGFFKREGRPTDKETLTSRLIDRPIRPLFVKGFKNEVQVMLTVLSHDLENDPDIVGMIGASAALVLSGLPFMGPIGAARVGYKDGEYVINPPCDEMDDSELDLVVAGTQDAVMMVESEAKELSEEVMLGAVMAGHKAFQPVIDMIIKLAERAAKEPWDYAPADHSAEEAKVRDLIGDDLAAAYTIVDKTERYKAVGAAKDKAVEALLQTEERPDGIDMTTLKDVMKAVESSIVRGGIIKTGKRIDGRSLDQVRSIVSEAGILPRTHGSALFTRGETQALVVATLGTGEDEQFIDALTGTYKERFMLHYNFPPYSVGETSFRLAPGRREIGHGKLAWRAVKAVLPTKEDFPYTIRLVSEITESNGSSSMATVCGASLSMMDAGVPITRPVSGIAMGLIKDPEGIAVLSDILGDEDHLGDMDFKVAGTTEGVTSLQMDIKIAGIDEEIMKTALAQASGGRLHILEEMGKALGEARTELGEFAPRIETITIPTDKIRDVIGSGGKVIREIVETTGAKVDVNDDGVIKVSSSDGASIKAALDWIHGLTAEPEEGQIYKGKVVKVMDFGAFVNFFGPKDGLVHVSQLKAERVNHPSDVVKEGQEVYVKLLGFDDRGKVRLSMKIIDQETGEEIKKEQEDAE</sequence>
<accession>Q0AK62</accession>